<proteinExistence type="inferred from homology"/>
<dbReference type="EMBL" id="CP000860">
    <property type="protein sequence ID" value="ACA58788.1"/>
    <property type="molecule type" value="Genomic_DNA"/>
</dbReference>
<dbReference type="RefSeq" id="WP_012301380.1">
    <property type="nucleotide sequence ID" value="NC_010424.1"/>
</dbReference>
<dbReference type="SMR" id="B1I1J0"/>
<dbReference type="STRING" id="477974.Daud_0227"/>
<dbReference type="KEGG" id="dau:Daud_0227"/>
<dbReference type="eggNOG" id="COG0089">
    <property type="taxonomic scope" value="Bacteria"/>
</dbReference>
<dbReference type="HOGENOM" id="CLU_037562_3_2_9"/>
<dbReference type="OrthoDB" id="9793353at2"/>
<dbReference type="Proteomes" id="UP000008544">
    <property type="component" value="Chromosome"/>
</dbReference>
<dbReference type="GO" id="GO:1990904">
    <property type="term" value="C:ribonucleoprotein complex"/>
    <property type="evidence" value="ECO:0007669"/>
    <property type="project" value="UniProtKB-KW"/>
</dbReference>
<dbReference type="GO" id="GO:0005840">
    <property type="term" value="C:ribosome"/>
    <property type="evidence" value="ECO:0007669"/>
    <property type="project" value="UniProtKB-KW"/>
</dbReference>
<dbReference type="GO" id="GO:0019843">
    <property type="term" value="F:rRNA binding"/>
    <property type="evidence" value="ECO:0007669"/>
    <property type="project" value="UniProtKB-UniRule"/>
</dbReference>
<dbReference type="GO" id="GO:0003735">
    <property type="term" value="F:structural constituent of ribosome"/>
    <property type="evidence" value="ECO:0007669"/>
    <property type="project" value="InterPro"/>
</dbReference>
<dbReference type="GO" id="GO:0006412">
    <property type="term" value="P:translation"/>
    <property type="evidence" value="ECO:0007669"/>
    <property type="project" value="UniProtKB-UniRule"/>
</dbReference>
<dbReference type="FunFam" id="3.30.70.330:FF:000001">
    <property type="entry name" value="50S ribosomal protein L23"/>
    <property type="match status" value="1"/>
</dbReference>
<dbReference type="Gene3D" id="3.30.70.330">
    <property type="match status" value="1"/>
</dbReference>
<dbReference type="HAMAP" id="MF_01369_B">
    <property type="entry name" value="Ribosomal_uL23_B"/>
    <property type="match status" value="1"/>
</dbReference>
<dbReference type="InterPro" id="IPR012677">
    <property type="entry name" value="Nucleotide-bd_a/b_plait_sf"/>
</dbReference>
<dbReference type="InterPro" id="IPR013025">
    <property type="entry name" value="Ribosomal_uL23-like"/>
</dbReference>
<dbReference type="InterPro" id="IPR012678">
    <property type="entry name" value="Ribosomal_uL23/eL15/eS24_sf"/>
</dbReference>
<dbReference type="NCBIfam" id="NF004359">
    <property type="entry name" value="PRK05738.1-3"/>
    <property type="match status" value="1"/>
</dbReference>
<dbReference type="NCBIfam" id="NF004363">
    <property type="entry name" value="PRK05738.2-4"/>
    <property type="match status" value="1"/>
</dbReference>
<dbReference type="NCBIfam" id="NF004364">
    <property type="entry name" value="PRK05738.2-5"/>
    <property type="match status" value="1"/>
</dbReference>
<dbReference type="PANTHER" id="PTHR11620">
    <property type="entry name" value="60S RIBOSOMAL PROTEIN L23A"/>
    <property type="match status" value="1"/>
</dbReference>
<dbReference type="Pfam" id="PF00276">
    <property type="entry name" value="Ribosomal_L23"/>
    <property type="match status" value="1"/>
</dbReference>
<dbReference type="SUPFAM" id="SSF54189">
    <property type="entry name" value="Ribosomal proteins S24e, L23 and L15e"/>
    <property type="match status" value="1"/>
</dbReference>
<feature type="chain" id="PRO_1000184083" description="Large ribosomal subunit protein uL23">
    <location>
        <begin position="1"/>
        <end position="95"/>
    </location>
</feature>
<sequence>MKFAHDILRKPLISEKSMSLTEGNKYTFIVDPRANKTEIKKAVEEIFKVKVLKVNTIRVKGKQVRRRNILGRKPETKKAVVTLRPGDKIEIFEGV</sequence>
<name>RL23_DESAP</name>
<organism>
    <name type="scientific">Desulforudis audaxviator (strain MP104C)</name>
    <dbReference type="NCBI Taxonomy" id="477974"/>
    <lineage>
        <taxon>Bacteria</taxon>
        <taxon>Bacillati</taxon>
        <taxon>Bacillota</taxon>
        <taxon>Clostridia</taxon>
        <taxon>Thermoanaerobacterales</taxon>
        <taxon>Candidatus Desulforudaceae</taxon>
        <taxon>Candidatus Desulforudis</taxon>
    </lineage>
</organism>
<gene>
    <name evidence="1" type="primary">rplW</name>
    <name type="ordered locus">Daud_0227</name>
</gene>
<keyword id="KW-1185">Reference proteome</keyword>
<keyword id="KW-0687">Ribonucleoprotein</keyword>
<keyword id="KW-0689">Ribosomal protein</keyword>
<keyword id="KW-0694">RNA-binding</keyword>
<keyword id="KW-0699">rRNA-binding</keyword>
<accession>B1I1J0</accession>
<reference key="1">
    <citation type="submission" date="2007-10" db="EMBL/GenBank/DDBJ databases">
        <title>Complete sequence of chromosome of Desulforudis audaxviator MP104C.</title>
        <authorList>
            <person name="Copeland A."/>
            <person name="Lucas S."/>
            <person name="Lapidus A."/>
            <person name="Barry K."/>
            <person name="Glavina del Rio T."/>
            <person name="Dalin E."/>
            <person name="Tice H."/>
            <person name="Bruce D."/>
            <person name="Pitluck S."/>
            <person name="Lowry S.R."/>
            <person name="Larimer F."/>
            <person name="Land M.L."/>
            <person name="Hauser L."/>
            <person name="Kyrpides N."/>
            <person name="Ivanova N.N."/>
            <person name="Richardson P."/>
        </authorList>
    </citation>
    <scope>NUCLEOTIDE SEQUENCE [LARGE SCALE GENOMIC DNA]</scope>
    <source>
        <strain>MP104C</strain>
    </source>
</reference>
<comment type="function">
    <text evidence="1">One of the early assembly proteins it binds 23S rRNA. One of the proteins that surrounds the polypeptide exit tunnel on the outside of the ribosome. Forms the main docking site for trigger factor binding to the ribosome.</text>
</comment>
<comment type="subunit">
    <text evidence="1">Part of the 50S ribosomal subunit. Contacts protein L29, and trigger factor when it is bound to the ribosome.</text>
</comment>
<comment type="similarity">
    <text evidence="1">Belongs to the universal ribosomal protein uL23 family.</text>
</comment>
<evidence type="ECO:0000255" key="1">
    <source>
        <dbReference type="HAMAP-Rule" id="MF_01369"/>
    </source>
</evidence>
<evidence type="ECO:0000305" key="2"/>
<protein>
    <recommendedName>
        <fullName evidence="1">Large ribosomal subunit protein uL23</fullName>
    </recommendedName>
    <alternativeName>
        <fullName evidence="2">50S ribosomal protein L23</fullName>
    </alternativeName>
</protein>